<protein>
    <recommendedName>
        <fullName>Somatostatin-1</fullName>
    </recommendedName>
    <alternativeName>
        <fullName>Somatostatin I</fullName>
    </alternativeName>
</protein>
<proteinExistence type="evidence at protein level"/>
<evidence type="ECO:0000305" key="1"/>
<reference key="1">
    <citation type="journal article" date="1986" name="Gen. Comp. Endocrinol.">
        <title>Characterization of coho salmon (Oncorhynchus kisutch) islet somatostatins.</title>
        <authorList>
            <person name="Plisetskaya E.M."/>
            <person name="Pollock H.G."/>
            <person name="Rouse J.B."/>
            <person name="Hamilton J.W."/>
            <person name="Kimmel J.R."/>
            <person name="Andrews P.C."/>
            <person name="Gorbman A."/>
        </authorList>
    </citation>
    <scope>PROTEIN SEQUENCE</scope>
    <source>
        <tissue>Pancreas</tissue>
    </source>
</reference>
<sequence>AGCKNFFWKTFTSC</sequence>
<organism>
    <name type="scientific">Oncorhynchus kisutch</name>
    <name type="common">Coho salmon</name>
    <name type="synonym">Salmo kisutch</name>
    <dbReference type="NCBI Taxonomy" id="8019"/>
    <lineage>
        <taxon>Eukaryota</taxon>
        <taxon>Metazoa</taxon>
        <taxon>Chordata</taxon>
        <taxon>Craniata</taxon>
        <taxon>Vertebrata</taxon>
        <taxon>Euteleostomi</taxon>
        <taxon>Actinopterygii</taxon>
        <taxon>Neopterygii</taxon>
        <taxon>Teleostei</taxon>
        <taxon>Protacanthopterygii</taxon>
        <taxon>Salmoniformes</taxon>
        <taxon>Salmonidae</taxon>
        <taxon>Salmoninae</taxon>
        <taxon>Oncorhynchus</taxon>
    </lineage>
</organism>
<dbReference type="PIR" id="B60842">
    <property type="entry name" value="B60842"/>
</dbReference>
<dbReference type="Proteomes" id="UP000694557">
    <property type="component" value="Unplaced"/>
</dbReference>
<dbReference type="GO" id="GO:0005576">
    <property type="term" value="C:extracellular region"/>
    <property type="evidence" value="ECO:0007669"/>
    <property type="project" value="UniProtKB-SubCell"/>
</dbReference>
<dbReference type="GO" id="GO:0005179">
    <property type="term" value="F:hormone activity"/>
    <property type="evidence" value="ECO:0007669"/>
    <property type="project" value="UniProtKB-KW"/>
</dbReference>
<dbReference type="InterPro" id="IPR018142">
    <property type="entry name" value="Somatostatin/Cortistatin_C"/>
</dbReference>
<dbReference type="Pfam" id="PF03002">
    <property type="entry name" value="Somatostatin"/>
    <property type="match status" value="1"/>
</dbReference>
<feature type="peptide" id="PRO_0000044373" description="Somatostatin-1">
    <location>
        <begin position="1"/>
        <end position="14"/>
    </location>
</feature>
<feature type="disulfide bond">
    <location>
        <begin position="3"/>
        <end position="14"/>
    </location>
</feature>
<name>SMS1_ONCKI</name>
<accession>P69133</accession>
<accession>P20750</accession>
<comment type="function">
    <text>Somatostatin inhibits the release of somatotropin.</text>
</comment>
<comment type="subcellular location">
    <subcellularLocation>
        <location>Secreted</location>
    </subcellularLocation>
</comment>
<comment type="similarity">
    <text evidence="1">Belongs to the somatostatin family.</text>
</comment>
<gene>
    <name type="primary">sst1</name>
</gene>
<keyword id="KW-0903">Direct protein sequencing</keyword>
<keyword id="KW-1015">Disulfide bond</keyword>
<keyword id="KW-0372">Hormone</keyword>
<keyword id="KW-1185">Reference proteome</keyword>
<keyword id="KW-0964">Secreted</keyword>